<proteinExistence type="inferred from homology"/>
<accession>A8H0A3</accession>
<dbReference type="EC" id="2.7.7.4" evidence="1"/>
<dbReference type="EMBL" id="CP000851">
    <property type="protein sequence ID" value="ABV85990.1"/>
    <property type="molecule type" value="Genomic_DNA"/>
</dbReference>
<dbReference type="RefSeq" id="WP_012153928.1">
    <property type="nucleotide sequence ID" value="NC_009901.1"/>
</dbReference>
<dbReference type="SMR" id="A8H0A3"/>
<dbReference type="STRING" id="398579.Spea_0663"/>
<dbReference type="KEGG" id="spl:Spea_0663"/>
<dbReference type="eggNOG" id="COG0175">
    <property type="taxonomic scope" value="Bacteria"/>
</dbReference>
<dbReference type="HOGENOM" id="CLU_043026_0_0_6"/>
<dbReference type="OrthoDB" id="9772604at2"/>
<dbReference type="UniPathway" id="UPA00140">
    <property type="reaction ID" value="UER00204"/>
</dbReference>
<dbReference type="Proteomes" id="UP000002608">
    <property type="component" value="Chromosome"/>
</dbReference>
<dbReference type="GO" id="GO:0005524">
    <property type="term" value="F:ATP binding"/>
    <property type="evidence" value="ECO:0007669"/>
    <property type="project" value="UniProtKB-KW"/>
</dbReference>
<dbReference type="GO" id="GO:0004781">
    <property type="term" value="F:sulfate adenylyltransferase (ATP) activity"/>
    <property type="evidence" value="ECO:0007669"/>
    <property type="project" value="UniProtKB-UniRule"/>
</dbReference>
<dbReference type="GO" id="GO:0070814">
    <property type="term" value="P:hydrogen sulfide biosynthetic process"/>
    <property type="evidence" value="ECO:0007669"/>
    <property type="project" value="UniProtKB-UniRule"/>
</dbReference>
<dbReference type="GO" id="GO:0000103">
    <property type="term" value="P:sulfate assimilation"/>
    <property type="evidence" value="ECO:0007669"/>
    <property type="project" value="UniProtKB-UniRule"/>
</dbReference>
<dbReference type="CDD" id="cd23946">
    <property type="entry name" value="Sulfate_adenylyltransferase_2"/>
    <property type="match status" value="1"/>
</dbReference>
<dbReference type="FunFam" id="3.40.50.620:FF:000002">
    <property type="entry name" value="Sulfate adenylyltransferase subunit 2"/>
    <property type="match status" value="1"/>
</dbReference>
<dbReference type="Gene3D" id="3.40.50.620">
    <property type="entry name" value="HUPs"/>
    <property type="match status" value="1"/>
</dbReference>
<dbReference type="HAMAP" id="MF_00064">
    <property type="entry name" value="Sulf_adenylyltr_sub2"/>
    <property type="match status" value="1"/>
</dbReference>
<dbReference type="InterPro" id="IPR002500">
    <property type="entry name" value="PAPS_reduct_dom"/>
</dbReference>
<dbReference type="InterPro" id="IPR014729">
    <property type="entry name" value="Rossmann-like_a/b/a_fold"/>
</dbReference>
<dbReference type="InterPro" id="IPR011784">
    <property type="entry name" value="SO4_adenylTrfase_ssu"/>
</dbReference>
<dbReference type="InterPro" id="IPR050128">
    <property type="entry name" value="Sulfate_adenylyltrnsfr_sub2"/>
</dbReference>
<dbReference type="NCBIfam" id="TIGR02039">
    <property type="entry name" value="CysD"/>
    <property type="match status" value="1"/>
</dbReference>
<dbReference type="NCBIfam" id="NF003587">
    <property type="entry name" value="PRK05253.1"/>
    <property type="match status" value="1"/>
</dbReference>
<dbReference type="NCBIfam" id="NF009214">
    <property type="entry name" value="PRK12563.1"/>
    <property type="match status" value="1"/>
</dbReference>
<dbReference type="PANTHER" id="PTHR43196">
    <property type="entry name" value="SULFATE ADENYLYLTRANSFERASE SUBUNIT 2"/>
    <property type="match status" value="1"/>
</dbReference>
<dbReference type="PANTHER" id="PTHR43196:SF1">
    <property type="entry name" value="SULFATE ADENYLYLTRANSFERASE SUBUNIT 2"/>
    <property type="match status" value="1"/>
</dbReference>
<dbReference type="Pfam" id="PF01507">
    <property type="entry name" value="PAPS_reduct"/>
    <property type="match status" value="1"/>
</dbReference>
<dbReference type="PIRSF" id="PIRSF002936">
    <property type="entry name" value="CysDAde_trans"/>
    <property type="match status" value="1"/>
</dbReference>
<dbReference type="SUPFAM" id="SSF52402">
    <property type="entry name" value="Adenine nucleotide alpha hydrolases-like"/>
    <property type="match status" value="1"/>
</dbReference>
<name>CYSD_SHEPA</name>
<protein>
    <recommendedName>
        <fullName evidence="1">Sulfate adenylyltransferase subunit 2</fullName>
        <ecNumber evidence="1">2.7.7.4</ecNumber>
    </recommendedName>
    <alternativeName>
        <fullName evidence="1">ATP-sulfurylase small subunit</fullName>
    </alternativeName>
    <alternativeName>
        <fullName evidence="1">Sulfate adenylate transferase</fullName>
        <shortName evidence="1">SAT</shortName>
    </alternativeName>
</protein>
<reference key="1">
    <citation type="submission" date="2007-10" db="EMBL/GenBank/DDBJ databases">
        <title>Complete sequence of Shewanella pealeana ATCC 700345.</title>
        <authorList>
            <consortium name="US DOE Joint Genome Institute"/>
            <person name="Copeland A."/>
            <person name="Lucas S."/>
            <person name="Lapidus A."/>
            <person name="Barry K."/>
            <person name="Glavina del Rio T."/>
            <person name="Dalin E."/>
            <person name="Tice H."/>
            <person name="Pitluck S."/>
            <person name="Chertkov O."/>
            <person name="Brettin T."/>
            <person name="Bruce D."/>
            <person name="Detter J.C."/>
            <person name="Han C."/>
            <person name="Schmutz J."/>
            <person name="Larimer F."/>
            <person name="Land M."/>
            <person name="Hauser L."/>
            <person name="Kyrpides N."/>
            <person name="Kim E."/>
            <person name="Zhao J.-S.Z."/>
            <person name="Manno D."/>
            <person name="Hawari J."/>
            <person name="Richardson P."/>
        </authorList>
    </citation>
    <scope>NUCLEOTIDE SEQUENCE [LARGE SCALE GENOMIC DNA]</scope>
    <source>
        <strain>ATCC 700345 / ANG-SQ1</strain>
    </source>
</reference>
<gene>
    <name evidence="1" type="primary">cysD</name>
    <name type="ordered locus">Spea_0663</name>
</gene>
<organism>
    <name type="scientific">Shewanella pealeana (strain ATCC 700345 / ANG-SQ1)</name>
    <dbReference type="NCBI Taxonomy" id="398579"/>
    <lineage>
        <taxon>Bacteria</taxon>
        <taxon>Pseudomonadati</taxon>
        <taxon>Pseudomonadota</taxon>
        <taxon>Gammaproteobacteria</taxon>
        <taxon>Alteromonadales</taxon>
        <taxon>Shewanellaceae</taxon>
        <taxon>Shewanella</taxon>
    </lineage>
</organism>
<evidence type="ECO:0000255" key="1">
    <source>
        <dbReference type="HAMAP-Rule" id="MF_00064"/>
    </source>
</evidence>
<feature type="chain" id="PRO_1000075084" description="Sulfate adenylyltransferase subunit 2">
    <location>
        <begin position="1"/>
        <end position="302"/>
    </location>
</feature>
<sequence>MAAKELSHLQQLEAESIQIIREVAAEFDNPVMMYSIGKDSSVMLHLARKAFYPGKIPFPLLHVDTDWKFKEMIAFRDEQAKEFGFELLVHKNPEGLEMGISPFEHGSAKHTDIMKTQGLKQALNKYGFDAAFGGARRDEEKSRAKERVYSFRDKHHTWDPKNQRPELWRTYNGAVNKGESIRVFPLSNWTELDIWQYIYQENIQLVPLYFAQKRPVVERDGMMIMVDDDRMPLAEGEQPKEELVRFRTLGCYPLTGAMHSEADTLEKIIEEMLLTRSSERQGRLIDSDQSASMELKKRQGYF</sequence>
<comment type="function">
    <text evidence="1">With CysN forms the ATP sulfurylase (ATPS) that catalyzes the adenylation of sulfate producing adenosine 5'-phosphosulfate (APS) and diphosphate, the first enzymatic step in sulfur assimilation pathway. APS synthesis involves the formation of a high-energy phosphoric-sulfuric acid anhydride bond driven by GTP hydrolysis by CysN coupled to ATP hydrolysis by CysD.</text>
</comment>
<comment type="catalytic activity">
    <reaction evidence="1">
        <text>sulfate + ATP + H(+) = adenosine 5'-phosphosulfate + diphosphate</text>
        <dbReference type="Rhea" id="RHEA:18133"/>
        <dbReference type="ChEBI" id="CHEBI:15378"/>
        <dbReference type="ChEBI" id="CHEBI:16189"/>
        <dbReference type="ChEBI" id="CHEBI:30616"/>
        <dbReference type="ChEBI" id="CHEBI:33019"/>
        <dbReference type="ChEBI" id="CHEBI:58243"/>
        <dbReference type="EC" id="2.7.7.4"/>
    </reaction>
</comment>
<comment type="pathway">
    <text evidence="1">Sulfur metabolism; hydrogen sulfide biosynthesis; sulfite from sulfate: step 1/3.</text>
</comment>
<comment type="subunit">
    <text evidence="1">Heterodimer composed of CysD, the smaller subunit, and CysN.</text>
</comment>
<comment type="similarity">
    <text evidence="1">Belongs to the PAPS reductase family. CysD subfamily.</text>
</comment>
<keyword id="KW-0067">ATP-binding</keyword>
<keyword id="KW-0547">Nucleotide-binding</keyword>
<keyword id="KW-0548">Nucleotidyltransferase</keyword>
<keyword id="KW-1185">Reference proteome</keyword>
<keyword id="KW-0808">Transferase</keyword>